<accession>Q3A3A5</accession>
<proteinExistence type="inferred from homology"/>
<gene>
    <name evidence="1" type="primary">ilvD</name>
    <name type="ordered locus">Pcar_1911</name>
</gene>
<dbReference type="EC" id="4.2.1.9" evidence="1"/>
<dbReference type="EMBL" id="CP000142">
    <property type="protein sequence ID" value="ABA89152.1"/>
    <property type="molecule type" value="Genomic_DNA"/>
</dbReference>
<dbReference type="RefSeq" id="WP_011341657.1">
    <property type="nucleotide sequence ID" value="NC_007498.2"/>
</dbReference>
<dbReference type="SMR" id="Q3A3A5"/>
<dbReference type="STRING" id="338963.Pcar_1911"/>
<dbReference type="KEGG" id="pca:Pcar_1911"/>
<dbReference type="eggNOG" id="COG0129">
    <property type="taxonomic scope" value="Bacteria"/>
</dbReference>
<dbReference type="HOGENOM" id="CLU_014271_4_2_7"/>
<dbReference type="OrthoDB" id="9807077at2"/>
<dbReference type="UniPathway" id="UPA00047">
    <property type="reaction ID" value="UER00057"/>
</dbReference>
<dbReference type="UniPathway" id="UPA00049">
    <property type="reaction ID" value="UER00061"/>
</dbReference>
<dbReference type="Proteomes" id="UP000002534">
    <property type="component" value="Chromosome"/>
</dbReference>
<dbReference type="GO" id="GO:0005829">
    <property type="term" value="C:cytosol"/>
    <property type="evidence" value="ECO:0007669"/>
    <property type="project" value="TreeGrafter"/>
</dbReference>
<dbReference type="GO" id="GO:0051537">
    <property type="term" value="F:2 iron, 2 sulfur cluster binding"/>
    <property type="evidence" value="ECO:0007669"/>
    <property type="project" value="UniProtKB-UniRule"/>
</dbReference>
<dbReference type="GO" id="GO:0004160">
    <property type="term" value="F:dihydroxy-acid dehydratase activity"/>
    <property type="evidence" value="ECO:0007669"/>
    <property type="project" value="UniProtKB-UniRule"/>
</dbReference>
<dbReference type="GO" id="GO:0000287">
    <property type="term" value="F:magnesium ion binding"/>
    <property type="evidence" value="ECO:0007669"/>
    <property type="project" value="UniProtKB-UniRule"/>
</dbReference>
<dbReference type="GO" id="GO:0009097">
    <property type="term" value="P:isoleucine biosynthetic process"/>
    <property type="evidence" value="ECO:0007669"/>
    <property type="project" value="UniProtKB-UniRule"/>
</dbReference>
<dbReference type="GO" id="GO:0009099">
    <property type="term" value="P:L-valine biosynthetic process"/>
    <property type="evidence" value="ECO:0007669"/>
    <property type="project" value="UniProtKB-UniRule"/>
</dbReference>
<dbReference type="FunFam" id="3.50.30.80:FF:000001">
    <property type="entry name" value="Dihydroxy-acid dehydratase"/>
    <property type="match status" value="1"/>
</dbReference>
<dbReference type="Gene3D" id="3.50.30.80">
    <property type="entry name" value="IlvD/EDD C-terminal domain-like"/>
    <property type="match status" value="1"/>
</dbReference>
<dbReference type="HAMAP" id="MF_00012">
    <property type="entry name" value="IlvD"/>
    <property type="match status" value="1"/>
</dbReference>
<dbReference type="InterPro" id="IPR042096">
    <property type="entry name" value="Dihydro-acid_dehy_C"/>
</dbReference>
<dbReference type="InterPro" id="IPR004404">
    <property type="entry name" value="DihydroxyA_deHydtase"/>
</dbReference>
<dbReference type="InterPro" id="IPR020558">
    <property type="entry name" value="DiOHA_6PGluconate_deHydtase_CS"/>
</dbReference>
<dbReference type="InterPro" id="IPR056740">
    <property type="entry name" value="ILV_EDD_C"/>
</dbReference>
<dbReference type="InterPro" id="IPR000581">
    <property type="entry name" value="ILV_EDD_N"/>
</dbReference>
<dbReference type="InterPro" id="IPR037237">
    <property type="entry name" value="IlvD/EDD_N"/>
</dbReference>
<dbReference type="NCBIfam" id="TIGR00110">
    <property type="entry name" value="ilvD"/>
    <property type="match status" value="1"/>
</dbReference>
<dbReference type="NCBIfam" id="NF002068">
    <property type="entry name" value="PRK00911.1"/>
    <property type="match status" value="1"/>
</dbReference>
<dbReference type="PANTHER" id="PTHR43661">
    <property type="entry name" value="D-XYLONATE DEHYDRATASE"/>
    <property type="match status" value="1"/>
</dbReference>
<dbReference type="PANTHER" id="PTHR43661:SF3">
    <property type="entry name" value="D-XYLONATE DEHYDRATASE YAGF-RELATED"/>
    <property type="match status" value="1"/>
</dbReference>
<dbReference type="Pfam" id="PF24877">
    <property type="entry name" value="ILV_EDD_C"/>
    <property type="match status" value="1"/>
</dbReference>
<dbReference type="Pfam" id="PF00920">
    <property type="entry name" value="ILVD_EDD_N"/>
    <property type="match status" value="1"/>
</dbReference>
<dbReference type="SUPFAM" id="SSF143975">
    <property type="entry name" value="IlvD/EDD N-terminal domain-like"/>
    <property type="match status" value="1"/>
</dbReference>
<dbReference type="SUPFAM" id="SSF52016">
    <property type="entry name" value="LeuD/IlvD-like"/>
    <property type="match status" value="1"/>
</dbReference>
<dbReference type="PROSITE" id="PS00886">
    <property type="entry name" value="ILVD_EDD_1"/>
    <property type="match status" value="1"/>
</dbReference>
<dbReference type="PROSITE" id="PS00887">
    <property type="entry name" value="ILVD_EDD_2"/>
    <property type="match status" value="1"/>
</dbReference>
<organism>
    <name type="scientific">Syntrophotalea carbinolica (strain DSM 2380 / NBRC 103641 / GraBd1)</name>
    <name type="common">Pelobacter carbinolicus</name>
    <dbReference type="NCBI Taxonomy" id="338963"/>
    <lineage>
        <taxon>Bacteria</taxon>
        <taxon>Pseudomonadati</taxon>
        <taxon>Thermodesulfobacteriota</taxon>
        <taxon>Desulfuromonadia</taxon>
        <taxon>Desulfuromonadales</taxon>
        <taxon>Syntrophotaleaceae</taxon>
        <taxon>Syntrophotalea</taxon>
    </lineage>
</organism>
<name>ILVD_SYNC1</name>
<comment type="function">
    <text evidence="1">Functions in the biosynthesis of branched-chain amino acids. Catalyzes the dehydration of (2R,3R)-2,3-dihydroxy-3-methylpentanoate (2,3-dihydroxy-3-methylvalerate) into 2-oxo-3-methylpentanoate (2-oxo-3-methylvalerate) and of (2R)-2,3-dihydroxy-3-methylbutanoate (2,3-dihydroxyisovalerate) into 2-oxo-3-methylbutanoate (2-oxoisovalerate), the penultimate precursor to L-isoleucine and L-valine, respectively.</text>
</comment>
<comment type="catalytic activity">
    <reaction evidence="1">
        <text>(2R)-2,3-dihydroxy-3-methylbutanoate = 3-methyl-2-oxobutanoate + H2O</text>
        <dbReference type="Rhea" id="RHEA:24809"/>
        <dbReference type="ChEBI" id="CHEBI:11851"/>
        <dbReference type="ChEBI" id="CHEBI:15377"/>
        <dbReference type="ChEBI" id="CHEBI:49072"/>
        <dbReference type="EC" id="4.2.1.9"/>
    </reaction>
    <physiologicalReaction direction="left-to-right" evidence="1">
        <dbReference type="Rhea" id="RHEA:24810"/>
    </physiologicalReaction>
</comment>
<comment type="catalytic activity">
    <reaction evidence="1">
        <text>(2R,3R)-2,3-dihydroxy-3-methylpentanoate = (S)-3-methyl-2-oxopentanoate + H2O</text>
        <dbReference type="Rhea" id="RHEA:27694"/>
        <dbReference type="ChEBI" id="CHEBI:15377"/>
        <dbReference type="ChEBI" id="CHEBI:35146"/>
        <dbReference type="ChEBI" id="CHEBI:49258"/>
        <dbReference type="EC" id="4.2.1.9"/>
    </reaction>
    <physiologicalReaction direction="left-to-right" evidence="1">
        <dbReference type="Rhea" id="RHEA:27695"/>
    </physiologicalReaction>
</comment>
<comment type="cofactor">
    <cofactor evidence="1">
        <name>[2Fe-2S] cluster</name>
        <dbReference type="ChEBI" id="CHEBI:190135"/>
    </cofactor>
    <text evidence="1">Binds 1 [2Fe-2S] cluster per subunit. This cluster acts as a Lewis acid cofactor.</text>
</comment>
<comment type="cofactor">
    <cofactor evidence="1">
        <name>Mg(2+)</name>
        <dbReference type="ChEBI" id="CHEBI:18420"/>
    </cofactor>
</comment>
<comment type="pathway">
    <text evidence="1">Amino-acid biosynthesis; L-isoleucine biosynthesis; L-isoleucine from 2-oxobutanoate: step 3/4.</text>
</comment>
<comment type="pathway">
    <text evidence="1">Amino-acid biosynthesis; L-valine biosynthesis; L-valine from pyruvate: step 3/4.</text>
</comment>
<comment type="subunit">
    <text evidence="1">Homodimer.</text>
</comment>
<comment type="similarity">
    <text evidence="1">Belongs to the IlvD/Edd family.</text>
</comment>
<feature type="chain" id="PRO_0000225405" description="Dihydroxy-acid dehydratase">
    <location>
        <begin position="1"/>
        <end position="556"/>
    </location>
</feature>
<feature type="active site" description="Proton acceptor" evidence="1">
    <location>
        <position position="470"/>
    </location>
</feature>
<feature type="binding site" evidence="1">
    <location>
        <position position="81"/>
    </location>
    <ligand>
        <name>Mg(2+)</name>
        <dbReference type="ChEBI" id="CHEBI:18420"/>
    </ligand>
</feature>
<feature type="binding site" evidence="1">
    <location>
        <position position="122"/>
    </location>
    <ligand>
        <name>[2Fe-2S] cluster</name>
        <dbReference type="ChEBI" id="CHEBI:190135"/>
    </ligand>
</feature>
<feature type="binding site" evidence="1">
    <location>
        <position position="123"/>
    </location>
    <ligand>
        <name>Mg(2+)</name>
        <dbReference type="ChEBI" id="CHEBI:18420"/>
    </ligand>
</feature>
<feature type="binding site" description="via carbamate group" evidence="1">
    <location>
        <position position="124"/>
    </location>
    <ligand>
        <name>Mg(2+)</name>
        <dbReference type="ChEBI" id="CHEBI:18420"/>
    </ligand>
</feature>
<feature type="binding site" evidence="1">
    <location>
        <position position="196"/>
    </location>
    <ligand>
        <name>[2Fe-2S] cluster</name>
        <dbReference type="ChEBI" id="CHEBI:190135"/>
    </ligand>
</feature>
<feature type="binding site" evidence="1">
    <location>
        <position position="444"/>
    </location>
    <ligand>
        <name>Mg(2+)</name>
        <dbReference type="ChEBI" id="CHEBI:18420"/>
    </ligand>
</feature>
<feature type="modified residue" description="N6-carboxylysine" evidence="1">
    <location>
        <position position="124"/>
    </location>
</feature>
<evidence type="ECO:0000255" key="1">
    <source>
        <dbReference type="HAMAP-Rule" id="MF_00012"/>
    </source>
</evidence>
<reference key="1">
    <citation type="submission" date="2005-10" db="EMBL/GenBank/DDBJ databases">
        <title>Complete sequence of Pelobacter carbinolicus DSM 2380.</title>
        <authorList>
            <person name="Copeland A."/>
            <person name="Lucas S."/>
            <person name="Lapidus A."/>
            <person name="Barry K."/>
            <person name="Detter J.C."/>
            <person name="Glavina T."/>
            <person name="Hammon N."/>
            <person name="Israni S."/>
            <person name="Pitluck S."/>
            <person name="Chertkov O."/>
            <person name="Schmutz J."/>
            <person name="Larimer F."/>
            <person name="Land M."/>
            <person name="Kyrpides N."/>
            <person name="Ivanova N."/>
            <person name="Richardson P."/>
        </authorList>
    </citation>
    <scope>NUCLEOTIDE SEQUENCE [LARGE SCALE GENOMIC DNA]</scope>
    <source>
        <strain>DSM 2380 / NBRC 103641 / GraBd1</strain>
    </source>
</reference>
<sequence>MKGKRSEAITQGFERAPHRALLMGTGIPRKELGKPLIGIATSFTDLIPGHIGMRDLERFIEKGVHTGGGYSFLFGIPGVCDGIAMGHKGMHYSLSTRELIADMVESIAEAHRLDGLVLLTNCDKITPGMLMAAARLDIPCIVVTAGPMLTGTGRGGRRYSFVTDTFEAMARYKAGEINAAELQQCEDRACPGAGSCQGLFTANTMAILTETLGMSLVGCGTALAVSSLKRQIAFASGERIVSLVREGITPRQILTREAFENAIRVDLALGGSSNTVLHLLSIAHEAEVDLPLDLFDKLSRETPQLASMNPGGKHFMEDLDAAGGVPGVLYQLRDQIHDNPTLNGVGVKQIIDSVIDVDETVIHPKEDAVRPEGGIAILTGNLTPDGAVVKQSGVSEKMMTFEGTARCFNSEEEAMQALMGGQVKAGDVVVIRYEGPKGGPGMREMLAPTATLMGLGLGDSVALITDGRFSGGTRGPCVGHVSPEAAVGGPIALVEDGDTIVLDIPSRRLEVKVSDQELAKRRERWQAPEPKIKKGWLSRYASVVTSANTGAVCKAR</sequence>
<keyword id="KW-0001">2Fe-2S</keyword>
<keyword id="KW-0028">Amino-acid biosynthesis</keyword>
<keyword id="KW-0100">Branched-chain amino acid biosynthesis</keyword>
<keyword id="KW-0408">Iron</keyword>
<keyword id="KW-0411">Iron-sulfur</keyword>
<keyword id="KW-0456">Lyase</keyword>
<keyword id="KW-0460">Magnesium</keyword>
<keyword id="KW-0479">Metal-binding</keyword>
<keyword id="KW-1185">Reference proteome</keyword>
<protein>
    <recommendedName>
        <fullName evidence="1">Dihydroxy-acid dehydratase</fullName>
        <shortName evidence="1">DAD</shortName>
        <ecNumber evidence="1">4.2.1.9</ecNumber>
    </recommendedName>
</protein>